<proteinExistence type="inferred from homology"/>
<protein>
    <recommendedName>
        <fullName evidence="1">Succinate--CoA ligase [ADP-forming] subunit beta</fullName>
        <ecNumber evidence="1">6.2.1.5</ecNumber>
    </recommendedName>
    <alternativeName>
        <fullName evidence="1">Succinyl-CoA synthetase subunit beta</fullName>
        <shortName evidence="1">SCS-beta</shortName>
    </alternativeName>
</protein>
<gene>
    <name evidence="1" type="primary">sucC</name>
    <name type="ordered locus">BF2351</name>
</gene>
<accession>Q5LCW4</accession>
<dbReference type="EC" id="6.2.1.5" evidence="1"/>
<dbReference type="EMBL" id="CR626927">
    <property type="protein sequence ID" value="CAH08049.1"/>
    <property type="molecule type" value="Genomic_DNA"/>
</dbReference>
<dbReference type="RefSeq" id="WP_005777701.1">
    <property type="nucleotide sequence ID" value="NZ_UFTH01000001.1"/>
</dbReference>
<dbReference type="SMR" id="Q5LCW4"/>
<dbReference type="PaxDb" id="272559-BF9343_2268"/>
<dbReference type="GeneID" id="60366284"/>
<dbReference type="KEGG" id="bfs:BF9343_2268"/>
<dbReference type="eggNOG" id="COG0045">
    <property type="taxonomic scope" value="Bacteria"/>
</dbReference>
<dbReference type="HOGENOM" id="CLU_037430_0_2_10"/>
<dbReference type="UniPathway" id="UPA00223">
    <property type="reaction ID" value="UER00999"/>
</dbReference>
<dbReference type="Proteomes" id="UP000006731">
    <property type="component" value="Chromosome"/>
</dbReference>
<dbReference type="GO" id="GO:0005829">
    <property type="term" value="C:cytosol"/>
    <property type="evidence" value="ECO:0007669"/>
    <property type="project" value="TreeGrafter"/>
</dbReference>
<dbReference type="GO" id="GO:0042709">
    <property type="term" value="C:succinate-CoA ligase complex"/>
    <property type="evidence" value="ECO:0007669"/>
    <property type="project" value="TreeGrafter"/>
</dbReference>
<dbReference type="GO" id="GO:0005524">
    <property type="term" value="F:ATP binding"/>
    <property type="evidence" value="ECO:0007669"/>
    <property type="project" value="UniProtKB-UniRule"/>
</dbReference>
<dbReference type="GO" id="GO:0000287">
    <property type="term" value="F:magnesium ion binding"/>
    <property type="evidence" value="ECO:0007669"/>
    <property type="project" value="UniProtKB-UniRule"/>
</dbReference>
<dbReference type="GO" id="GO:0004775">
    <property type="term" value="F:succinate-CoA ligase (ADP-forming) activity"/>
    <property type="evidence" value="ECO:0007669"/>
    <property type="project" value="UniProtKB-UniRule"/>
</dbReference>
<dbReference type="GO" id="GO:0004776">
    <property type="term" value="F:succinate-CoA ligase (GDP-forming) activity"/>
    <property type="evidence" value="ECO:0007669"/>
    <property type="project" value="RHEA"/>
</dbReference>
<dbReference type="GO" id="GO:0006104">
    <property type="term" value="P:succinyl-CoA metabolic process"/>
    <property type="evidence" value="ECO:0007669"/>
    <property type="project" value="TreeGrafter"/>
</dbReference>
<dbReference type="GO" id="GO:0006099">
    <property type="term" value="P:tricarboxylic acid cycle"/>
    <property type="evidence" value="ECO:0007669"/>
    <property type="project" value="UniProtKB-UniRule"/>
</dbReference>
<dbReference type="FunFam" id="3.30.470.20:FF:000002">
    <property type="entry name" value="Succinate--CoA ligase [ADP-forming] subunit beta"/>
    <property type="match status" value="1"/>
</dbReference>
<dbReference type="FunFam" id="3.40.50.261:FF:000007">
    <property type="entry name" value="Succinate--CoA ligase [ADP-forming] subunit beta"/>
    <property type="match status" value="1"/>
</dbReference>
<dbReference type="Gene3D" id="3.30.1490.20">
    <property type="entry name" value="ATP-grasp fold, A domain"/>
    <property type="match status" value="1"/>
</dbReference>
<dbReference type="Gene3D" id="3.30.470.20">
    <property type="entry name" value="ATP-grasp fold, B domain"/>
    <property type="match status" value="1"/>
</dbReference>
<dbReference type="Gene3D" id="3.40.50.261">
    <property type="entry name" value="Succinyl-CoA synthetase domains"/>
    <property type="match status" value="1"/>
</dbReference>
<dbReference type="HAMAP" id="MF_00558">
    <property type="entry name" value="Succ_CoA_beta"/>
    <property type="match status" value="1"/>
</dbReference>
<dbReference type="InterPro" id="IPR013650">
    <property type="entry name" value="ATP-grasp_succ-CoA_synth-type"/>
</dbReference>
<dbReference type="InterPro" id="IPR013815">
    <property type="entry name" value="ATP_grasp_subdomain_1"/>
</dbReference>
<dbReference type="InterPro" id="IPR017866">
    <property type="entry name" value="Succ-CoA_synthase_bsu_CS"/>
</dbReference>
<dbReference type="InterPro" id="IPR005811">
    <property type="entry name" value="SUCC_ACL_C"/>
</dbReference>
<dbReference type="InterPro" id="IPR005809">
    <property type="entry name" value="Succ_CoA_ligase-like_bsu"/>
</dbReference>
<dbReference type="InterPro" id="IPR016102">
    <property type="entry name" value="Succinyl-CoA_synth-like"/>
</dbReference>
<dbReference type="NCBIfam" id="NF001913">
    <property type="entry name" value="PRK00696.1"/>
    <property type="match status" value="1"/>
</dbReference>
<dbReference type="NCBIfam" id="TIGR01016">
    <property type="entry name" value="sucCoAbeta"/>
    <property type="match status" value="1"/>
</dbReference>
<dbReference type="PANTHER" id="PTHR11815:SF10">
    <property type="entry name" value="SUCCINATE--COA LIGASE [GDP-FORMING] SUBUNIT BETA, MITOCHONDRIAL"/>
    <property type="match status" value="1"/>
</dbReference>
<dbReference type="PANTHER" id="PTHR11815">
    <property type="entry name" value="SUCCINYL-COA SYNTHETASE BETA CHAIN"/>
    <property type="match status" value="1"/>
</dbReference>
<dbReference type="Pfam" id="PF08442">
    <property type="entry name" value="ATP-grasp_2"/>
    <property type="match status" value="1"/>
</dbReference>
<dbReference type="Pfam" id="PF00549">
    <property type="entry name" value="Ligase_CoA"/>
    <property type="match status" value="1"/>
</dbReference>
<dbReference type="PIRSF" id="PIRSF001554">
    <property type="entry name" value="SucCS_beta"/>
    <property type="match status" value="1"/>
</dbReference>
<dbReference type="SUPFAM" id="SSF56059">
    <property type="entry name" value="Glutathione synthetase ATP-binding domain-like"/>
    <property type="match status" value="1"/>
</dbReference>
<dbReference type="SUPFAM" id="SSF52210">
    <property type="entry name" value="Succinyl-CoA synthetase domains"/>
    <property type="match status" value="1"/>
</dbReference>
<dbReference type="PROSITE" id="PS01217">
    <property type="entry name" value="SUCCINYL_COA_LIG_3"/>
    <property type="match status" value="1"/>
</dbReference>
<organism>
    <name type="scientific">Bacteroides fragilis (strain ATCC 25285 / DSM 2151 / CCUG 4856 / JCM 11019 / LMG 10263 / NCTC 9343 / Onslow / VPI 2553 / EN-2)</name>
    <dbReference type="NCBI Taxonomy" id="272559"/>
    <lineage>
        <taxon>Bacteria</taxon>
        <taxon>Pseudomonadati</taxon>
        <taxon>Bacteroidota</taxon>
        <taxon>Bacteroidia</taxon>
        <taxon>Bacteroidales</taxon>
        <taxon>Bacteroidaceae</taxon>
        <taxon>Bacteroides</taxon>
    </lineage>
</organism>
<reference key="1">
    <citation type="journal article" date="2005" name="Science">
        <title>Extensive DNA inversions in the B. fragilis genome control variable gene expression.</title>
        <authorList>
            <person name="Cerdeno-Tarraga A.-M."/>
            <person name="Patrick S."/>
            <person name="Crossman L.C."/>
            <person name="Blakely G."/>
            <person name="Abratt V."/>
            <person name="Lennard N."/>
            <person name="Poxton I."/>
            <person name="Duerden B."/>
            <person name="Harris B."/>
            <person name="Quail M.A."/>
            <person name="Barron A."/>
            <person name="Clark L."/>
            <person name="Corton C."/>
            <person name="Doggett J."/>
            <person name="Holden M.T.G."/>
            <person name="Larke N."/>
            <person name="Line A."/>
            <person name="Lord A."/>
            <person name="Norbertczak H."/>
            <person name="Ormond D."/>
            <person name="Price C."/>
            <person name="Rabbinowitsch E."/>
            <person name="Woodward J."/>
            <person name="Barrell B.G."/>
            <person name="Parkhill J."/>
        </authorList>
    </citation>
    <scope>NUCLEOTIDE SEQUENCE [LARGE SCALE GENOMIC DNA]</scope>
    <source>
        <strain>ATCC 25285 / DSM 2151 / CCUG 4856 / JCM 11019 / LMG 10263 / NCTC 9343 / Onslow / VPI 2553 / EN-2</strain>
    </source>
</reference>
<feature type="chain" id="PRO_1000082011" description="Succinate--CoA ligase [ADP-forming] subunit beta">
    <location>
        <begin position="1"/>
        <end position="382"/>
    </location>
</feature>
<feature type="binding site" evidence="1">
    <location>
        <position position="46"/>
    </location>
    <ligand>
        <name>ATP</name>
        <dbReference type="ChEBI" id="CHEBI:30616"/>
    </ligand>
</feature>
<feature type="binding site" evidence="1">
    <location>
        <begin position="53"/>
        <end position="55"/>
    </location>
    <ligand>
        <name>ATP</name>
        <dbReference type="ChEBI" id="CHEBI:30616"/>
    </ligand>
</feature>
<feature type="binding site" evidence="1">
    <location>
        <position position="95"/>
    </location>
    <ligand>
        <name>ATP</name>
        <dbReference type="ChEBI" id="CHEBI:30616"/>
    </ligand>
</feature>
<feature type="binding site" evidence="1">
    <location>
        <position position="100"/>
    </location>
    <ligand>
        <name>ATP</name>
        <dbReference type="ChEBI" id="CHEBI:30616"/>
    </ligand>
</feature>
<feature type="binding site" evidence="1">
    <location>
        <position position="192"/>
    </location>
    <ligand>
        <name>Mg(2+)</name>
        <dbReference type="ChEBI" id="CHEBI:18420"/>
    </ligand>
</feature>
<feature type="binding site" evidence="1">
    <location>
        <position position="206"/>
    </location>
    <ligand>
        <name>Mg(2+)</name>
        <dbReference type="ChEBI" id="CHEBI:18420"/>
    </ligand>
</feature>
<feature type="binding site" evidence="1">
    <location>
        <position position="257"/>
    </location>
    <ligand>
        <name>substrate</name>
        <note>ligand shared with subunit alpha</note>
    </ligand>
</feature>
<feature type="binding site" evidence="1">
    <location>
        <begin position="314"/>
        <end position="316"/>
    </location>
    <ligand>
        <name>substrate</name>
        <note>ligand shared with subunit alpha</note>
    </ligand>
</feature>
<sequence>MKVHEYQAKEIFSTYGIPVERHALCHTADGAVAAYHRMGVNRVAIKAQVLTGGRGKAGGVKLANNDRDVYQYAQTILEMTIKGYPVTKILLSEAVNIAAEYYISFTIDRNTRSVTLIMSAAGGMDIEEVARQSPEKIIRCSIDPLIGVPDYLAHKFAFSLFEQAEQANRMATIIQDLYKAFIEKDASLAEINPLVLTPVGTLLAIDAKMVFDDNALYRHPDLQKLSEPTEDEKLEAIAKERGFSYVRMDGEIGCMVNGAGLAMTTMDMIKLYGGNPANFLDIGGSSNPVKVIEAMRLLLDDKKVKVVFINIFGGITRCDDVAIGLLQAFEQIQTDIPIIVRLTGTNGNMGRELLRKNNRFQVAQTMEEATKMAIESLKKESI</sequence>
<evidence type="ECO:0000255" key="1">
    <source>
        <dbReference type="HAMAP-Rule" id="MF_00558"/>
    </source>
</evidence>
<keyword id="KW-0067">ATP-binding</keyword>
<keyword id="KW-0436">Ligase</keyword>
<keyword id="KW-0460">Magnesium</keyword>
<keyword id="KW-0479">Metal-binding</keyword>
<keyword id="KW-0547">Nucleotide-binding</keyword>
<keyword id="KW-0816">Tricarboxylic acid cycle</keyword>
<name>SUCC_BACFN</name>
<comment type="function">
    <text evidence="1">Succinyl-CoA synthetase functions in the citric acid cycle (TCA), coupling the hydrolysis of succinyl-CoA to the synthesis of either ATP or GTP and thus represents the only step of substrate-level phosphorylation in the TCA. The beta subunit provides nucleotide specificity of the enzyme and binds the substrate succinate, while the binding sites for coenzyme A and phosphate are found in the alpha subunit.</text>
</comment>
<comment type="catalytic activity">
    <reaction evidence="1">
        <text>succinate + ATP + CoA = succinyl-CoA + ADP + phosphate</text>
        <dbReference type="Rhea" id="RHEA:17661"/>
        <dbReference type="ChEBI" id="CHEBI:30031"/>
        <dbReference type="ChEBI" id="CHEBI:30616"/>
        <dbReference type="ChEBI" id="CHEBI:43474"/>
        <dbReference type="ChEBI" id="CHEBI:57287"/>
        <dbReference type="ChEBI" id="CHEBI:57292"/>
        <dbReference type="ChEBI" id="CHEBI:456216"/>
        <dbReference type="EC" id="6.2.1.5"/>
    </reaction>
    <physiologicalReaction direction="right-to-left" evidence="1">
        <dbReference type="Rhea" id="RHEA:17663"/>
    </physiologicalReaction>
</comment>
<comment type="catalytic activity">
    <reaction evidence="1">
        <text>GTP + succinate + CoA = succinyl-CoA + GDP + phosphate</text>
        <dbReference type="Rhea" id="RHEA:22120"/>
        <dbReference type="ChEBI" id="CHEBI:30031"/>
        <dbReference type="ChEBI" id="CHEBI:37565"/>
        <dbReference type="ChEBI" id="CHEBI:43474"/>
        <dbReference type="ChEBI" id="CHEBI:57287"/>
        <dbReference type="ChEBI" id="CHEBI:57292"/>
        <dbReference type="ChEBI" id="CHEBI:58189"/>
    </reaction>
    <physiologicalReaction direction="right-to-left" evidence="1">
        <dbReference type="Rhea" id="RHEA:22122"/>
    </physiologicalReaction>
</comment>
<comment type="cofactor">
    <cofactor evidence="1">
        <name>Mg(2+)</name>
        <dbReference type="ChEBI" id="CHEBI:18420"/>
    </cofactor>
    <text evidence="1">Binds 1 Mg(2+) ion per subunit.</text>
</comment>
<comment type="pathway">
    <text evidence="1">Carbohydrate metabolism; tricarboxylic acid cycle; succinate from succinyl-CoA (ligase route): step 1/1.</text>
</comment>
<comment type="subunit">
    <text evidence="1">Heterotetramer of two alpha and two beta subunits.</text>
</comment>
<comment type="similarity">
    <text evidence="1">Belongs to the succinate/malate CoA ligase beta subunit family.</text>
</comment>